<dbReference type="EMBL" id="AB063296">
    <property type="protein sequence ID" value="BAB60902.1"/>
    <property type="status" value="ALT_INIT"/>
    <property type="molecule type" value="mRNA"/>
</dbReference>
<dbReference type="EMBL" id="AB063297">
    <property type="protein sequence ID" value="BAB60903.1"/>
    <property type="molecule type" value="mRNA"/>
</dbReference>
<dbReference type="EMBL" id="AB063298">
    <property type="protein sequence ID" value="BAB60904.1"/>
    <property type="molecule type" value="mRNA"/>
</dbReference>
<dbReference type="EMBL" id="AF440403">
    <property type="protein sequence ID" value="AAP97317.1"/>
    <property type="molecule type" value="mRNA"/>
</dbReference>
<dbReference type="EMBL" id="AF497717">
    <property type="protein sequence ID" value="AAM19218.1"/>
    <property type="molecule type" value="mRNA"/>
</dbReference>
<dbReference type="EMBL" id="AK055558">
    <property type="protein sequence ID" value="BAG51535.1"/>
    <property type="molecule type" value="mRNA"/>
</dbReference>
<dbReference type="EMBL" id="AK289914">
    <property type="protein sequence ID" value="BAF82603.1"/>
    <property type="molecule type" value="mRNA"/>
</dbReference>
<dbReference type="EMBL" id="AK294413">
    <property type="protein sequence ID" value="BAG57663.1"/>
    <property type="molecule type" value="mRNA"/>
</dbReference>
<dbReference type="EMBL" id="AK302699">
    <property type="protein sequence ID" value="BAG63926.1"/>
    <property type="molecule type" value="mRNA"/>
</dbReference>
<dbReference type="EMBL" id="CR749242">
    <property type="protein sequence ID" value="CAH18098.1"/>
    <property type="molecule type" value="mRNA"/>
</dbReference>
<dbReference type="EMBL" id="AC117466">
    <property type="status" value="NOT_ANNOTATED_CDS"/>
    <property type="molecule type" value="Genomic_DNA"/>
</dbReference>
<dbReference type="EMBL" id="AC069444">
    <property type="status" value="NOT_ANNOTATED_CDS"/>
    <property type="molecule type" value="Genomic_DNA"/>
</dbReference>
<dbReference type="EMBL" id="BC126394">
    <property type="protein sequence ID" value="AAI26395.1"/>
    <property type="molecule type" value="mRNA"/>
</dbReference>
<dbReference type="CCDS" id="CCDS2994.1">
    <molecule id="Q7Z4T9-7"/>
</dbReference>
<dbReference type="RefSeq" id="NP_001307245.1">
    <property type="nucleotide sequence ID" value="NM_001320316.1"/>
</dbReference>
<dbReference type="RefSeq" id="NP_001307246.2">
    <molecule id="Q7Z4T9-3"/>
    <property type="nucleotide sequence ID" value="NM_001320317.2"/>
</dbReference>
<dbReference type="RefSeq" id="NP_001307247.2">
    <molecule id="Q7Z4T9-6"/>
    <property type="nucleotide sequence ID" value="NM_001320318.2"/>
</dbReference>
<dbReference type="RefSeq" id="NP_203528.2">
    <molecule id="Q7Z4T9-7"/>
    <property type="nucleotide sequence ID" value="NM_033364.3"/>
</dbReference>
<dbReference type="RefSeq" id="XP_011511579.1">
    <property type="nucleotide sequence ID" value="XM_011513277.1"/>
</dbReference>
<dbReference type="PDB" id="8J07">
    <property type="method" value="EM"/>
    <property type="resolution" value="4.10 A"/>
    <property type="chains" value="d1=1-767"/>
</dbReference>
<dbReference type="PDBsum" id="8J07"/>
<dbReference type="EMDB" id="EMD-35888"/>
<dbReference type="SMR" id="Q7Z4T9"/>
<dbReference type="BioGRID" id="124630">
    <property type="interactions" value="10"/>
</dbReference>
<dbReference type="CORUM" id="Q7Z4T9"/>
<dbReference type="FunCoup" id="Q7Z4T9">
    <property type="interactions" value="155"/>
</dbReference>
<dbReference type="IntAct" id="Q7Z4T9">
    <property type="interactions" value="7"/>
</dbReference>
<dbReference type="STRING" id="9606.ENSP00000273390"/>
<dbReference type="GlyGen" id="Q7Z4T9">
    <property type="glycosylation" value="1 site, 1 O-linked glycan (1 site)"/>
</dbReference>
<dbReference type="iPTMnet" id="Q7Z4T9"/>
<dbReference type="PhosphoSitePlus" id="Q7Z4T9"/>
<dbReference type="BioMuta" id="MAATS1"/>
<dbReference type="DMDM" id="300669603"/>
<dbReference type="MassIVE" id="Q7Z4T9"/>
<dbReference type="PaxDb" id="9606-ENSP00000273390"/>
<dbReference type="PeptideAtlas" id="Q7Z4T9"/>
<dbReference type="ProteomicsDB" id="69234">
    <molecule id="Q7Z4T9-1"/>
</dbReference>
<dbReference type="ProteomicsDB" id="69235">
    <molecule id="Q7Z4T9-2"/>
</dbReference>
<dbReference type="ProteomicsDB" id="69236">
    <molecule id="Q7Z4T9-3"/>
</dbReference>
<dbReference type="ProteomicsDB" id="69238">
    <molecule id="Q7Z4T9-5"/>
</dbReference>
<dbReference type="ProteomicsDB" id="69239">
    <molecule id="Q7Z4T9-6"/>
</dbReference>
<dbReference type="ProteomicsDB" id="69240">
    <molecule id="Q7Z4T9-7"/>
</dbReference>
<dbReference type="ProteomicsDB" id="69241">
    <molecule id="Q7Z4T9-8"/>
</dbReference>
<dbReference type="Antibodypedia" id="32764">
    <property type="antibodies" value="133 antibodies from 16 providers"/>
</dbReference>
<dbReference type="DNASU" id="89876"/>
<dbReference type="Ensembl" id="ENST00000273390.9">
    <molecule id="Q7Z4T9-7"/>
    <property type="protein sequence ID" value="ENSP00000273390.5"/>
    <property type="gene ID" value="ENSG00000183833.16"/>
</dbReference>
<dbReference type="Ensembl" id="ENST00000463700.1">
    <molecule id="Q7Z4T9-2"/>
    <property type="protein sequence ID" value="ENSP00000419489.1"/>
    <property type="gene ID" value="ENSG00000183833.16"/>
</dbReference>
<dbReference type="GeneID" id="89876"/>
<dbReference type="KEGG" id="hsa:89876"/>
<dbReference type="MANE-Select" id="ENST00000273390.9">
    <property type="protein sequence ID" value="ENSP00000273390.5"/>
    <property type="RefSeq nucleotide sequence ID" value="NM_033364.4"/>
    <property type="RefSeq protein sequence ID" value="NP_203528.3"/>
</dbReference>
<dbReference type="UCSC" id="uc003edc.3">
    <molecule id="Q7Z4T9-7"/>
    <property type="organism name" value="human"/>
</dbReference>
<dbReference type="AGR" id="HGNC:24010"/>
<dbReference type="CTD" id="89876"/>
<dbReference type="DisGeNET" id="89876"/>
<dbReference type="GeneCards" id="CFAP91"/>
<dbReference type="HGNC" id="HGNC:24010">
    <property type="gene designation" value="CFAP91"/>
</dbReference>
<dbReference type="HPA" id="ENSG00000183833">
    <property type="expression patterns" value="Tissue enhanced (choroid plexus, fallopian tube)"/>
</dbReference>
<dbReference type="MalaCards" id="CFAP91"/>
<dbReference type="MIM" id="609910">
    <property type="type" value="gene"/>
</dbReference>
<dbReference type="MIM" id="619177">
    <property type="type" value="phenotype"/>
</dbReference>
<dbReference type="neXtProt" id="NX_Q7Z4T9"/>
<dbReference type="OpenTargets" id="ENSG00000183833"/>
<dbReference type="VEuPathDB" id="HostDB:ENSG00000183833"/>
<dbReference type="eggNOG" id="ENOG502QRFI">
    <property type="taxonomic scope" value="Eukaryota"/>
</dbReference>
<dbReference type="GeneTree" id="ENSGT00390000003024"/>
<dbReference type="HOGENOM" id="CLU_011633_0_0_1"/>
<dbReference type="InParanoid" id="Q7Z4T9"/>
<dbReference type="OMA" id="VQTMYRD"/>
<dbReference type="OrthoDB" id="567787at2759"/>
<dbReference type="PAN-GO" id="Q7Z4T9">
    <property type="GO annotations" value="0 GO annotations based on evolutionary models"/>
</dbReference>
<dbReference type="PhylomeDB" id="Q7Z4T9"/>
<dbReference type="TreeFam" id="TF328648"/>
<dbReference type="PathwayCommons" id="Q7Z4T9"/>
<dbReference type="SignaLink" id="Q7Z4T9"/>
<dbReference type="BioGRID-ORCS" id="89876">
    <property type="hits" value="12 hits in 1154 CRISPR screens"/>
</dbReference>
<dbReference type="ChiTaRS" id="MAATS1">
    <property type="organism name" value="human"/>
</dbReference>
<dbReference type="GeneWiki" id="C3orf15"/>
<dbReference type="GenomeRNAi" id="89876"/>
<dbReference type="Pharos" id="Q7Z4T9">
    <property type="development level" value="Tbio"/>
</dbReference>
<dbReference type="PRO" id="PR:Q7Z4T9"/>
<dbReference type="Proteomes" id="UP000005640">
    <property type="component" value="Chromosome 3"/>
</dbReference>
<dbReference type="RNAct" id="Q7Z4T9">
    <property type="molecule type" value="protein"/>
</dbReference>
<dbReference type="Bgee" id="ENSG00000183833">
    <property type="expression patterns" value="Expressed in right uterine tube and 155 other cell types or tissues"/>
</dbReference>
<dbReference type="ExpressionAtlas" id="Q7Z4T9">
    <property type="expression patterns" value="baseline and differential"/>
</dbReference>
<dbReference type="GO" id="GO:0005930">
    <property type="term" value="C:axoneme"/>
    <property type="evidence" value="ECO:0000250"/>
    <property type="project" value="UniProtKB"/>
</dbReference>
<dbReference type="GO" id="GO:0005739">
    <property type="term" value="C:mitochondrion"/>
    <property type="evidence" value="ECO:0007669"/>
    <property type="project" value="UniProtKB-SubCell"/>
</dbReference>
<dbReference type="GO" id="GO:0031514">
    <property type="term" value="C:motile cilium"/>
    <property type="evidence" value="ECO:0000250"/>
    <property type="project" value="UniProtKB"/>
</dbReference>
<dbReference type="GO" id="GO:1904158">
    <property type="term" value="P:axonemal central apparatus assembly"/>
    <property type="evidence" value="ECO:0000315"/>
    <property type="project" value="UniProtKB"/>
</dbReference>
<dbReference type="GO" id="GO:0030154">
    <property type="term" value="P:cell differentiation"/>
    <property type="evidence" value="ECO:0007669"/>
    <property type="project" value="UniProtKB-KW"/>
</dbReference>
<dbReference type="GO" id="GO:0003341">
    <property type="term" value="P:cilium movement"/>
    <property type="evidence" value="ECO:0000250"/>
    <property type="project" value="UniProtKB"/>
</dbReference>
<dbReference type="GO" id="GO:0007283">
    <property type="term" value="P:spermatogenesis"/>
    <property type="evidence" value="ECO:0000315"/>
    <property type="project" value="UniProtKB"/>
</dbReference>
<dbReference type="InterPro" id="IPR026720">
    <property type="entry name" value="CFAP91"/>
</dbReference>
<dbReference type="InterPro" id="IPR032840">
    <property type="entry name" value="CFAP91_dom"/>
</dbReference>
<dbReference type="PANTHER" id="PTHR22455">
    <property type="entry name" value="CILIA- AND FLAGELLA-ASSOCIATED PROTEIN 91"/>
    <property type="match status" value="1"/>
</dbReference>
<dbReference type="PANTHER" id="PTHR22455:SF10">
    <property type="entry name" value="CILIA- AND FLAGELLA-ASSOCIATED PROTEIN 91"/>
    <property type="match status" value="1"/>
</dbReference>
<dbReference type="Pfam" id="PF14738">
    <property type="entry name" value="CFAP91"/>
    <property type="match status" value="1"/>
</dbReference>
<evidence type="ECO:0000250" key="1">
    <source>
        <dbReference type="UniProtKB" id="A8IH47"/>
    </source>
</evidence>
<evidence type="ECO:0000250" key="2">
    <source>
        <dbReference type="UniProtKB" id="Q8BRC6"/>
    </source>
</evidence>
<evidence type="ECO:0000256" key="3">
    <source>
        <dbReference type="SAM" id="MobiDB-lite"/>
    </source>
</evidence>
<evidence type="ECO:0000269" key="4">
    <source>
    </source>
</evidence>
<evidence type="ECO:0000269" key="5">
    <source>
    </source>
</evidence>
<evidence type="ECO:0000269" key="6">
    <source>
    </source>
</evidence>
<evidence type="ECO:0000269" key="7">
    <source>
    </source>
</evidence>
<evidence type="ECO:0000269" key="8">
    <source>
    </source>
</evidence>
<evidence type="ECO:0000269" key="9">
    <source>
    </source>
</evidence>
<evidence type="ECO:0000269" key="10">
    <source ref="2"/>
</evidence>
<evidence type="ECO:0000303" key="11">
    <source>
    </source>
</evidence>
<evidence type="ECO:0000303" key="12">
    <source>
    </source>
</evidence>
<evidence type="ECO:0000303" key="13">
    <source>
    </source>
</evidence>
<evidence type="ECO:0000303" key="14">
    <source>
    </source>
</evidence>
<evidence type="ECO:0000303" key="15">
    <source ref="2"/>
</evidence>
<evidence type="ECO:0000305" key="16"/>
<evidence type="ECO:0000312" key="17">
    <source>
        <dbReference type="HGNC" id="HGNC:24010"/>
    </source>
</evidence>
<protein>
    <recommendedName>
        <fullName evidence="16">Cilia- and flagella-associated protein 91</fullName>
        <shortName evidence="16">CFAP91</shortName>
    </recommendedName>
    <alternativeName>
        <fullName evidence="13">AMY-1-associating protein expressed in testis 1</fullName>
        <shortName evidence="13">AAT-1</shortName>
    </alternativeName>
    <alternativeName>
        <fullName evidence="11">MYCBP/AMY-1-associated testis-expressed protein 1</fullName>
    </alternativeName>
    <alternativeName>
        <fullName evidence="11">Protein MAATS1</fullName>
    </alternativeName>
</protein>
<keyword id="KW-0002">3D-structure</keyword>
<keyword id="KW-0877">Alternative promoter usage</keyword>
<keyword id="KW-0025">Alternative splicing</keyword>
<keyword id="KW-0966">Cell projection</keyword>
<keyword id="KW-0963">Cytoplasm</keyword>
<keyword id="KW-0206">Cytoskeleton</keyword>
<keyword id="KW-0221">Differentiation</keyword>
<keyword id="KW-0496">Mitochondrion</keyword>
<keyword id="KW-0597">Phosphoprotein</keyword>
<keyword id="KW-1267">Proteomics identification</keyword>
<keyword id="KW-1185">Reference proteome</keyword>
<keyword id="KW-0744">Spermatogenesis</keyword>
<gene>
    <name evidence="17" type="primary">CFAP91</name>
    <name evidence="13" type="synonym">AAT1</name>
    <name type="synonym">C3orf15</name>
    <name type="synonym">MAATS1</name>
</gene>
<organism>
    <name type="scientific">Homo sapiens</name>
    <name type="common">Human</name>
    <dbReference type="NCBI Taxonomy" id="9606"/>
    <lineage>
        <taxon>Eukaryota</taxon>
        <taxon>Metazoa</taxon>
        <taxon>Chordata</taxon>
        <taxon>Craniata</taxon>
        <taxon>Vertebrata</taxon>
        <taxon>Euteleostomi</taxon>
        <taxon>Mammalia</taxon>
        <taxon>Eutheria</taxon>
        <taxon>Euarchontoglires</taxon>
        <taxon>Primates</taxon>
        <taxon>Haplorrhini</taxon>
        <taxon>Catarrhini</taxon>
        <taxon>Hominidae</taxon>
        <taxon>Homo</taxon>
    </lineage>
</organism>
<sequence>MSHAVTIEEPQAQPQVSQTRYRERSRAGSHISSNRAYDFLYDPLFIVSSEKDHTQANIQATLIRSRLRKVPRFKTMFSNLIHYPRYSLYWSKSDPVPPFISREWKGHKEKHREALRQLTTTDASFQMPKEVYEDPEVTGKNRYKYFERPFLPFFQQMPFNVVYAVSKAEPYTFPPTSTKHLSIPSKSTVGTQTDYRDADVQTDPYSAEYVVCQDSIPELLTLATLTWGRGLPAGQAEVEMIERAREKRAWEASLPALSDTSQFEKRRKMMNEMERKEWAFREQEIEKLQEIRLEVLKELLRKREENQNEVNMKHLNARWSKLQEGKEAKMAKIQRTHVSTIRKLVGKRKNIEGKLERRNIIKDYSDYASQVYGPLSRLGCFPDNNSEDFVVKNYYLNTYEGLVELESCLPDFVTQPQIRAPKPKVITTKAGFLKRAARLDYELAEVHKALLDKKNKVLEVKKPPRFLQRNPIPQPRLPTPTLEMTSNEEEEMEMAVIYLQKLLRGRVVQNMMFEGKEKRLELIQELRTCHALQEDEKLVKKAEKQVTLALQRQRNLHEHKVSLVENHLAGLEGRALADMFDFLSKELVRLQEERRIHAFVMLAERQRRVREAEESGRRQVEKQRLREEDEIFKEVVKVHHSTISSYLEDIILNTEANTAEEQARAEIEKMAEKINDIAYEMESRRTYLQSEEIVAELVYSFLIPEVQKYFVKEKVRNAQRKHILAAHQIIHSYTESMVQKKLTEGEQDEASNAAMLLEKETQNENNS</sequence>
<feature type="chain" id="PRO_0000064417" description="Cilia- and flagella-associated protein 91">
    <location>
        <begin position="1"/>
        <end position="767"/>
    </location>
</feature>
<feature type="region of interest" description="Disordered" evidence="3">
    <location>
        <begin position="1"/>
        <end position="29"/>
    </location>
</feature>
<feature type="splice variant" id="VSP_059499" description="In isoform 5.">
    <location>
        <begin position="1"/>
        <end position="736"/>
    </location>
</feature>
<feature type="splice variant" id="VSP_039503" description="In isoform 6." evidence="12">
    <location>
        <begin position="1"/>
        <end position="126"/>
    </location>
</feature>
<feature type="splice variant" id="VSP_014907" description="In isoform 3." evidence="14">
    <original>MSHAVTIEEPQAQPQVSQTRYRERSRAGSHISSNRAYDFLYDPLFIVSSEKDHTQANIQATLIRSRL</original>
    <variation>MIFCT</variation>
    <location>
        <begin position="1"/>
        <end position="67"/>
    </location>
</feature>
<feature type="splice variant" id="VSP_039504" description="In isoform 8." evidence="12">
    <original>MSHAVTIEEPQAQPQVSQTRYRERSRAGSHISSNRAYDFLY</original>
    <variation>MIFCTVRTAADLPLRPSPPRP</variation>
    <location>
        <begin position="1"/>
        <end position="41"/>
    </location>
</feature>
<feature type="splice variant" id="VSP_014910" description="In isoform 2." evidence="15">
    <original>RGLPAGQAEV</original>
    <variation>ELVNLLTIGR</variation>
    <location>
        <begin position="229"/>
        <end position="238"/>
    </location>
</feature>
<feature type="splice variant" id="VSP_014911" description="In isoform 2." evidence="15">
    <location>
        <begin position="239"/>
        <end position="767"/>
    </location>
</feature>
<feature type="splice variant" id="VSP_059500" description="In isoform 1.">
    <location>
        <begin position="330"/>
        <end position="493"/>
    </location>
</feature>
<feature type="sequence variant" id="VAR_030243" description="In dbSNP:rs6438544." evidence="5 6 8 10">
    <original>A</original>
    <variation>P</variation>
    <location>
        <position position="207"/>
    </location>
</feature>
<feature type="sequence variant" id="VAR_030244" description="In dbSNP:rs9817771.">
    <original>S</original>
    <variation>T</variation>
    <location>
        <position position="253"/>
    </location>
</feature>
<feature type="sequence variant" id="VAR_030245" description="In dbSNP:rs9819218.">
    <original>S</original>
    <variation>C</variation>
    <location>
        <position position="320"/>
    </location>
</feature>
<feature type="sequence conflict" description="In Ref. 3; BAG51535." evidence="16" ref="3">
    <original>N</original>
    <variation>D</variation>
    <location>
        <position position="311"/>
    </location>
</feature>
<feature type="sequence conflict" description="In Ref. 3; BAF82603." evidence="16" ref="3">
    <original>K</original>
    <variation>R</variation>
    <location>
        <position position="362"/>
    </location>
</feature>
<feature type="sequence conflict" description="In Ref. 2; AAP97317." evidence="16" ref="2">
    <original>V</original>
    <variation>I</variation>
    <location>
        <position position="508"/>
    </location>
</feature>
<feature type="sequence conflict" description="In Ref. 3; BAG51535." evidence="16" ref="3">
    <original>R</original>
    <variation>C</variation>
    <location>
        <position position="624"/>
    </location>
</feature>
<feature type="sequence conflict" description="In Ref. 1; BAB60902." evidence="16" ref="1">
    <original>VK</original>
    <variation>A</variation>
    <location>
        <begin position="636"/>
        <end position="637"/>
    </location>
</feature>
<feature type="sequence conflict" description="In Ref. 4; CAH18098." evidence="16" ref="4">
    <original>D</original>
    <variation>A</variation>
    <location>
        <position position="649"/>
    </location>
</feature>
<feature type="sequence conflict" description="In Ref. 3; BAG63926." evidence="16" ref="3">
    <original>E</original>
    <variation>G</variation>
    <location>
        <position position="680"/>
    </location>
</feature>
<accession>Q7Z4T9</accession>
<accession>A0AVK2</accession>
<accession>A8K1J9</accession>
<accession>B3KP23</accession>
<accession>B4DG52</accession>
<accession>B4DZ14</accession>
<accession>C9JUG4</accession>
<accession>Q68DX2</accession>
<accession>Q8TD41</accession>
<accession>Q96A45</accession>
<accession>Q96JE8</accession>
<name>CFA91_HUMAN</name>
<comment type="function">
    <text evidence="1 4 9">Involved in sperm flagellum axonemal organization and function (PubMed:12223483, PubMed:32161152). May regulate cilium motility through its role in the assembly of the axonemal radial spokes (By similarity).</text>
</comment>
<comment type="subunit">
    <text evidence="2 4 7">Interacts with MYCBP and AKAP1 (PubMed:12223483). Part of a complex containing MYCBP, AKAP1 and PRKAR2B. Interacts with CFAP61 (By similarity).</text>
</comment>
<comment type="subunit">
    <molecule>Isoform 3</molecule>
    <text evidence="7">Does not interact with MYCBP.</text>
</comment>
<comment type="interaction">
    <interactant intactId="EBI-2119657">
        <id>Q7Z4T9</id>
    </interactant>
    <interactant intactId="EBI-744973">
        <id>Q9C005</id>
        <label>DPY30</label>
    </interactant>
    <organismsDiffer>false</organismsDiffer>
    <experiments>3</experiments>
</comment>
<comment type="interaction">
    <interactant intactId="EBI-17172567">
        <id>Q7Z4T9-3</id>
    </interactant>
    <interactant intactId="EBI-2120060">
        <id>Q92667-2</id>
        <label>AKAP1</label>
    </interactant>
    <organismsDiffer>false</organismsDiffer>
    <experiments>3</experiments>
</comment>
<comment type="interaction">
    <interactant intactId="EBI-17172567">
        <id>Q7Z4T9-3</id>
    </interactant>
    <interactant intactId="EBI-716185">
        <id>Q99417</id>
        <label>MYCBP</label>
    </interactant>
    <organismsDiffer>false</organismsDiffer>
    <experiments>5</experiments>
</comment>
<comment type="subcellular location">
    <subcellularLocation>
        <location evidence="4 7">Mitochondrion</location>
    </subcellularLocation>
    <subcellularLocation>
        <location evidence="4 7">Cytoplasm</location>
    </subcellularLocation>
    <subcellularLocation>
        <location evidence="1">Cytoplasm</location>
        <location evidence="1">Cytoskeleton</location>
        <location evidence="1">Cilium axoneme</location>
    </subcellularLocation>
    <text>Localized in the neck of the sperm.</text>
</comment>
<comment type="subcellular location">
    <molecule>Isoform 7</molecule>
    <subcellularLocation>
        <location evidence="7">Cytoplasm</location>
    </subcellularLocation>
</comment>
<comment type="alternative products">
    <event type="alternative promoter"/>
    <event type="alternative splicing"/>
    <isoform>
        <id>Q7Z4T9-7</id>
        <name>7</name>
        <name evidence="13">AAT-1L</name>
        <sequence type="displayed"/>
    </isoform>
    <isoform>
        <id>Q7Z4T9-1</id>
        <name>1</name>
        <name evidence="13">AAT-1M</name>
        <sequence type="described" ref="VSP_059500"/>
    </isoform>
    <isoform>
        <id>Q7Z4T9-2</id>
        <name>2</name>
        <sequence type="described" ref="VSP_014910 VSP_014911"/>
    </isoform>
    <isoform>
        <id>Q7Z4T9-3</id>
        <name>3</name>
        <sequence type="described" ref="VSP_014907"/>
    </isoform>
    <isoform>
        <id>Q7Z4T9-6</id>
        <name>6</name>
        <sequence type="described" ref="VSP_039503"/>
    </isoform>
    <isoform>
        <id>Q7Z4T9-8</id>
        <name>8</name>
        <sequence type="described" ref="VSP_039504"/>
    </isoform>
    <isoform>
        <id>Q7Z4T9-5</id>
        <name>5</name>
        <name evidence="13">AAT1-beta</name>
        <sequence type="described" ref="VSP_059499"/>
    </isoform>
    <text>Additional isoforms may exist.</text>
</comment>
<comment type="tissue specificity">
    <molecule>Isoform 1</molecule>
    <text>Strongly expressed in the liver.</text>
</comment>
<comment type="tissue specificity">
    <molecule>Isoform 7</molecule>
    <text evidence="7 9">Widely expressed, but strongly expressed in all spermatogenesis-related tissues, including the testis, the epithelium of cauda and the corpus epididymis, as well as the spermatid and mature sperm. Also expressed in Leydig cells.</text>
</comment>
<comment type="PTM">
    <text evidence="4">Phosphorylated by PKA.</text>
</comment>
<comment type="disease" evidence="9">
    <disease id="DI-06022">
        <name>Spermatogenic failure 51</name>
        <acronym>SPGF51</acronym>
        <description>An autosomal recessive infertility disorder characterized by asthenoteratozoospermia. Spermatozoa exhibit multiple morphologic abnormalities, including absent, short, bent, coiled and irregular-caliber flagella. Abnormalities of the sperm head, base, and acrosome have also been observed.</description>
        <dbReference type="MIM" id="619177"/>
    </disease>
    <text>The disease is caused by variants affecting the gene represented in this entry.</text>
</comment>
<comment type="miscellaneous">
    <molecule>Isoform 5</molecule>
    <text evidence="16">May be produced by alternative promoter usage.</text>
</comment>
<comment type="similarity">
    <text>Belongs to the CFAP91 family.</text>
</comment>
<comment type="sequence caution" evidence="16">
    <conflict type="erroneous initiation">
        <sequence resource="EMBL-CDS" id="BAB60902"/>
    </conflict>
    <text>Truncated N-terminus.</text>
</comment>
<proteinExistence type="evidence at protein level"/>
<reference key="1">
    <citation type="journal article" date="2002" name="J. Biol. Chem.">
        <title>AAT-1, a novel testis-specific AMY-1-binding protein, forms a quaternary complex between AMY-1, A-kinase anchor protein 84 and a regulatory subunit of cAMP-dependent protein kinase and is phosphorylated by its kinase.</title>
        <authorList>
            <person name="Yukitake H."/>
            <person name="Furusawa M."/>
            <person name="Taira T."/>
            <person name="Iguchi-Ariga S.M.M."/>
            <person name="Ariga H."/>
        </authorList>
    </citation>
    <scope>NUCLEOTIDE SEQUENCE [MRNA] (ISOFORM 5)</scope>
    <scope>NUCLEOTIDE SEQUENCE [MRNA] OF 617-767 (ISOFORM 7)</scope>
    <scope>FUNCTION</scope>
    <scope>INTERACTION WITH MYCBP AND AKAP1</scope>
    <scope>PHOSPHORYLATION</scope>
    <scope>SUBCELLULAR LOCATION</scope>
    <source>
        <tissue>Testis</tissue>
    </source>
</reference>
<reference key="2">
    <citation type="submission" date="2002-03" db="EMBL/GenBank/DDBJ databases">
        <authorList>
            <person name="Guo J.H."/>
            <person name="Yu L."/>
        </authorList>
    </citation>
    <scope>NUCLEOTIDE SEQUENCE [LARGE SCALE MRNA] (ISOFORMS 1 AND 2)</scope>
    <scope>VARIANT PRO-207</scope>
    <source>
        <tissue>Lung</tissue>
    </source>
</reference>
<reference key="3">
    <citation type="journal article" date="2004" name="Nat. Genet.">
        <title>Complete sequencing and characterization of 21,243 full-length human cDNAs.</title>
        <authorList>
            <person name="Ota T."/>
            <person name="Suzuki Y."/>
            <person name="Nishikawa T."/>
            <person name="Otsuki T."/>
            <person name="Sugiyama T."/>
            <person name="Irie R."/>
            <person name="Wakamatsu A."/>
            <person name="Hayashi K."/>
            <person name="Sato H."/>
            <person name="Nagai K."/>
            <person name="Kimura K."/>
            <person name="Makita H."/>
            <person name="Sekine M."/>
            <person name="Obayashi M."/>
            <person name="Nishi T."/>
            <person name="Shibahara T."/>
            <person name="Tanaka T."/>
            <person name="Ishii S."/>
            <person name="Yamamoto J."/>
            <person name="Saito K."/>
            <person name="Kawai Y."/>
            <person name="Isono Y."/>
            <person name="Nakamura Y."/>
            <person name="Nagahari K."/>
            <person name="Murakami K."/>
            <person name="Yasuda T."/>
            <person name="Iwayanagi T."/>
            <person name="Wagatsuma M."/>
            <person name="Shiratori A."/>
            <person name="Sudo H."/>
            <person name="Hosoiri T."/>
            <person name="Kaku Y."/>
            <person name="Kodaira H."/>
            <person name="Kondo H."/>
            <person name="Sugawara M."/>
            <person name="Takahashi M."/>
            <person name="Kanda K."/>
            <person name="Yokoi T."/>
            <person name="Furuya T."/>
            <person name="Kikkawa E."/>
            <person name="Omura Y."/>
            <person name="Abe K."/>
            <person name="Kamihara K."/>
            <person name="Katsuta N."/>
            <person name="Sato K."/>
            <person name="Tanikawa M."/>
            <person name="Yamazaki M."/>
            <person name="Ninomiya K."/>
            <person name="Ishibashi T."/>
            <person name="Yamashita H."/>
            <person name="Murakawa K."/>
            <person name="Fujimori K."/>
            <person name="Tanai H."/>
            <person name="Kimata M."/>
            <person name="Watanabe M."/>
            <person name="Hiraoka S."/>
            <person name="Chiba Y."/>
            <person name="Ishida S."/>
            <person name="Ono Y."/>
            <person name="Takiguchi S."/>
            <person name="Watanabe S."/>
            <person name="Yosida M."/>
            <person name="Hotuta T."/>
            <person name="Kusano J."/>
            <person name="Kanehori K."/>
            <person name="Takahashi-Fujii A."/>
            <person name="Hara H."/>
            <person name="Tanase T.-O."/>
            <person name="Nomura Y."/>
            <person name="Togiya S."/>
            <person name="Komai F."/>
            <person name="Hara R."/>
            <person name="Takeuchi K."/>
            <person name="Arita M."/>
            <person name="Imose N."/>
            <person name="Musashino K."/>
            <person name="Yuuki H."/>
            <person name="Oshima A."/>
            <person name="Sasaki N."/>
            <person name="Aotsuka S."/>
            <person name="Yoshikawa Y."/>
            <person name="Matsunawa H."/>
            <person name="Ichihara T."/>
            <person name="Shiohata N."/>
            <person name="Sano S."/>
            <person name="Moriya S."/>
            <person name="Momiyama H."/>
            <person name="Satoh N."/>
            <person name="Takami S."/>
            <person name="Terashima Y."/>
            <person name="Suzuki O."/>
            <person name="Nakagawa S."/>
            <person name="Senoh A."/>
            <person name="Mizoguchi H."/>
            <person name="Goto Y."/>
            <person name="Shimizu F."/>
            <person name="Wakebe H."/>
            <person name="Hishigaki H."/>
            <person name="Watanabe T."/>
            <person name="Sugiyama A."/>
            <person name="Takemoto M."/>
            <person name="Kawakami B."/>
            <person name="Yamazaki M."/>
            <person name="Watanabe K."/>
            <person name="Kumagai A."/>
            <person name="Itakura S."/>
            <person name="Fukuzumi Y."/>
            <person name="Fujimori Y."/>
            <person name="Komiyama M."/>
            <person name="Tashiro H."/>
            <person name="Tanigami A."/>
            <person name="Fujiwara T."/>
            <person name="Ono T."/>
            <person name="Yamada K."/>
            <person name="Fujii Y."/>
            <person name="Ozaki K."/>
            <person name="Hirao M."/>
            <person name="Ohmori Y."/>
            <person name="Kawabata A."/>
            <person name="Hikiji T."/>
            <person name="Kobatake N."/>
            <person name="Inagaki H."/>
            <person name="Ikema Y."/>
            <person name="Okamoto S."/>
            <person name="Okitani R."/>
            <person name="Kawakami T."/>
            <person name="Noguchi S."/>
            <person name="Itoh T."/>
            <person name="Shigeta K."/>
            <person name="Senba T."/>
            <person name="Matsumura K."/>
            <person name="Nakajima Y."/>
            <person name="Mizuno T."/>
            <person name="Morinaga M."/>
            <person name="Sasaki M."/>
            <person name="Togashi T."/>
            <person name="Oyama M."/>
            <person name="Hata H."/>
            <person name="Watanabe M."/>
            <person name="Komatsu T."/>
            <person name="Mizushima-Sugano J."/>
            <person name="Satoh T."/>
            <person name="Shirai Y."/>
            <person name="Takahashi Y."/>
            <person name="Nakagawa K."/>
            <person name="Okumura K."/>
            <person name="Nagase T."/>
            <person name="Nomura N."/>
            <person name="Kikuchi H."/>
            <person name="Masuho Y."/>
            <person name="Yamashita R."/>
            <person name="Nakai K."/>
            <person name="Yada T."/>
            <person name="Nakamura Y."/>
            <person name="Ohara O."/>
            <person name="Isogai T."/>
            <person name="Sugano S."/>
        </authorList>
    </citation>
    <scope>NUCLEOTIDE SEQUENCE [LARGE SCALE MRNA] (ISOFORMS 6; 7 AND 8)</scope>
    <scope>VARIANT PRO-207</scope>
    <source>
        <tissue>Amygdala</tissue>
        <tissue>Corpus callosum</tissue>
        <tissue>Lung</tissue>
        <tissue>Testis</tissue>
    </source>
</reference>
<reference key="4">
    <citation type="journal article" date="2007" name="BMC Genomics">
        <title>The full-ORF clone resource of the German cDNA consortium.</title>
        <authorList>
            <person name="Bechtel S."/>
            <person name="Rosenfelder H."/>
            <person name="Duda A."/>
            <person name="Schmidt C.P."/>
            <person name="Ernst U."/>
            <person name="Wellenreuther R."/>
            <person name="Mehrle A."/>
            <person name="Schuster C."/>
            <person name="Bahr A."/>
            <person name="Bloecker H."/>
            <person name="Heubner D."/>
            <person name="Hoerlein A."/>
            <person name="Michel G."/>
            <person name="Wedler H."/>
            <person name="Koehrer K."/>
            <person name="Ottenwaelder B."/>
            <person name="Poustka A."/>
            <person name="Wiemann S."/>
            <person name="Schupp I."/>
        </authorList>
    </citation>
    <scope>NUCLEOTIDE SEQUENCE [LARGE SCALE MRNA] (ISOFORM 3)</scope>
    <scope>VARIANT PRO-207</scope>
    <source>
        <tissue>Testis</tissue>
    </source>
</reference>
<reference key="5">
    <citation type="journal article" date="2006" name="Nature">
        <title>The DNA sequence, annotation and analysis of human chromosome 3.</title>
        <authorList>
            <person name="Muzny D.M."/>
            <person name="Scherer S.E."/>
            <person name="Kaul R."/>
            <person name="Wang J."/>
            <person name="Yu J."/>
            <person name="Sudbrak R."/>
            <person name="Buhay C.J."/>
            <person name="Chen R."/>
            <person name="Cree A."/>
            <person name="Ding Y."/>
            <person name="Dugan-Rocha S."/>
            <person name="Gill R."/>
            <person name="Gunaratne P."/>
            <person name="Harris R.A."/>
            <person name="Hawes A.C."/>
            <person name="Hernandez J."/>
            <person name="Hodgson A.V."/>
            <person name="Hume J."/>
            <person name="Jackson A."/>
            <person name="Khan Z.M."/>
            <person name="Kovar-Smith C."/>
            <person name="Lewis L.R."/>
            <person name="Lozado R.J."/>
            <person name="Metzker M.L."/>
            <person name="Milosavljevic A."/>
            <person name="Miner G.R."/>
            <person name="Morgan M.B."/>
            <person name="Nazareth L.V."/>
            <person name="Scott G."/>
            <person name="Sodergren E."/>
            <person name="Song X.-Z."/>
            <person name="Steffen D."/>
            <person name="Wei S."/>
            <person name="Wheeler D.A."/>
            <person name="Wright M.W."/>
            <person name="Worley K.C."/>
            <person name="Yuan Y."/>
            <person name="Zhang Z."/>
            <person name="Adams C.Q."/>
            <person name="Ansari-Lari M.A."/>
            <person name="Ayele M."/>
            <person name="Brown M.J."/>
            <person name="Chen G."/>
            <person name="Chen Z."/>
            <person name="Clendenning J."/>
            <person name="Clerc-Blankenburg K.P."/>
            <person name="Chen R."/>
            <person name="Chen Z."/>
            <person name="Davis C."/>
            <person name="Delgado O."/>
            <person name="Dinh H.H."/>
            <person name="Dong W."/>
            <person name="Draper H."/>
            <person name="Ernst S."/>
            <person name="Fu G."/>
            <person name="Gonzalez-Garay M.L."/>
            <person name="Garcia D.K."/>
            <person name="Gillett W."/>
            <person name="Gu J."/>
            <person name="Hao B."/>
            <person name="Haugen E."/>
            <person name="Havlak P."/>
            <person name="He X."/>
            <person name="Hennig S."/>
            <person name="Hu S."/>
            <person name="Huang W."/>
            <person name="Jackson L.R."/>
            <person name="Jacob L.S."/>
            <person name="Kelly S.H."/>
            <person name="Kube M."/>
            <person name="Levy R."/>
            <person name="Li Z."/>
            <person name="Liu B."/>
            <person name="Liu J."/>
            <person name="Liu W."/>
            <person name="Lu J."/>
            <person name="Maheshwari M."/>
            <person name="Nguyen B.-V."/>
            <person name="Okwuonu G.O."/>
            <person name="Palmeiri A."/>
            <person name="Pasternak S."/>
            <person name="Perez L.M."/>
            <person name="Phelps K.A."/>
            <person name="Plopper F.J."/>
            <person name="Qiang B."/>
            <person name="Raymond C."/>
            <person name="Rodriguez R."/>
            <person name="Saenphimmachak C."/>
            <person name="Santibanez J."/>
            <person name="Shen H."/>
            <person name="Shen Y."/>
            <person name="Subramanian S."/>
            <person name="Tabor P.E."/>
            <person name="Verduzco D."/>
            <person name="Waldron L."/>
            <person name="Wang J."/>
            <person name="Wang J."/>
            <person name="Wang Q."/>
            <person name="Williams G.A."/>
            <person name="Wong G.K.-S."/>
            <person name="Yao Z."/>
            <person name="Zhang J."/>
            <person name="Zhang X."/>
            <person name="Zhao G."/>
            <person name="Zhou J."/>
            <person name="Zhou Y."/>
            <person name="Nelson D."/>
            <person name="Lehrach H."/>
            <person name="Reinhardt R."/>
            <person name="Naylor S.L."/>
            <person name="Yang H."/>
            <person name="Olson M."/>
            <person name="Weinstock G."/>
            <person name="Gibbs R.A."/>
        </authorList>
    </citation>
    <scope>NUCLEOTIDE SEQUENCE [LARGE SCALE GENOMIC DNA]</scope>
</reference>
<reference key="6">
    <citation type="journal article" date="2004" name="Genome Res.">
        <title>The status, quality, and expansion of the NIH full-length cDNA project: the Mammalian Gene Collection (MGC).</title>
        <authorList>
            <consortium name="The MGC Project Team"/>
        </authorList>
    </citation>
    <scope>NUCLEOTIDE SEQUENCE [LARGE SCALE MRNA] (ISOFORM 7)</scope>
    <scope>VARIANT PRO-207</scope>
    <source>
        <tissue>Lung</tissue>
    </source>
</reference>
<reference key="7">
    <citation type="journal article" date="2005" name="Biol. Pharm. Bull.">
        <title>Structure and characterization of AAT-1 isoforms.</title>
        <authorList>
            <person name="Matsuda E."/>
            <person name="Ishizaki R."/>
            <person name="Taira T."/>
            <person name="Iguchi-Ariga S.M.M."/>
            <person name="Ariga H."/>
        </authorList>
    </citation>
    <scope>ALTERNATIVE SPLICING</scope>
    <scope>INTERACTION WITH MYCBP</scope>
    <scope>TISSUE SPECIFICITY (ISOFORM 1)</scope>
    <scope>SUBCELLULAR LOCATION (ISOFORM 7)</scope>
    <scope>SUBCELLULAR LOCATION</scope>
</reference>
<reference key="8">
    <citation type="journal article" date="2020" name="J. Med. Genet.">
        <title>Biallelic variants in MAATS1 encoding CFAP91, a calmodulin-associated and spoke-associated complex protein, cause severe astheno-teratozoospermia and male infertility.</title>
        <authorList>
            <person name="Martinez G."/>
            <person name="Beurois J."/>
            <person name="Dacheux D."/>
            <person name="Cazin C."/>
            <person name="Bidart M."/>
            <person name="Kherraf Z.E."/>
            <person name="Robinson D.R."/>
            <person name="Satre V."/>
            <person name="Le Gac G."/>
            <person name="Ka C."/>
            <person name="Gourlaouen I."/>
            <person name="Fichou Y."/>
            <person name="Petre G."/>
            <person name="Dulioust E."/>
            <person name="Zouari R."/>
            <person name="Thierry-Mieg N."/>
            <person name="Toure A."/>
            <person name="Arnoult C."/>
            <person name="Bonhivers M."/>
            <person name="Ray P."/>
            <person name="Coutton C."/>
        </authorList>
    </citation>
    <scope>INVOLVEMENT IN SPGF51</scope>
    <scope>FUNCTION</scope>
</reference>